<name>ACTP_ECOL5</name>
<comment type="function">
    <text evidence="1">Transports acetate.</text>
</comment>
<comment type="subcellular location">
    <subcellularLocation>
        <location evidence="1">Cell inner membrane</location>
        <topology evidence="1">Multi-pass membrane protein</topology>
    </subcellularLocation>
</comment>
<comment type="similarity">
    <text evidence="1">Belongs to the sodium:solute symporter (SSF) (TC 2.A.21) family.</text>
</comment>
<organism>
    <name type="scientific">Escherichia coli O6:K15:H31 (strain 536 / UPEC)</name>
    <dbReference type="NCBI Taxonomy" id="362663"/>
    <lineage>
        <taxon>Bacteria</taxon>
        <taxon>Pseudomonadati</taxon>
        <taxon>Pseudomonadota</taxon>
        <taxon>Gammaproteobacteria</taxon>
        <taxon>Enterobacterales</taxon>
        <taxon>Enterobacteriaceae</taxon>
        <taxon>Escherichia</taxon>
    </lineage>
</organism>
<keyword id="KW-0997">Cell inner membrane</keyword>
<keyword id="KW-1003">Cell membrane</keyword>
<keyword id="KW-0406">Ion transport</keyword>
<keyword id="KW-0472">Membrane</keyword>
<keyword id="KW-0915">Sodium</keyword>
<keyword id="KW-0739">Sodium transport</keyword>
<keyword id="KW-0769">Symport</keyword>
<keyword id="KW-0812">Transmembrane</keyword>
<keyword id="KW-1133">Transmembrane helix</keyword>
<keyword id="KW-0813">Transport</keyword>
<proteinExistence type="inferred from homology"/>
<sequence length="549" mass="59192">MKRVLTALAATLPFAANAADAISGAVERQPTNWQAIIMFLIFVVFTLGITYWASKRVRSRNDYYTAGGNITGFQNGLAIAGDYMSAASFLGISALVFTSGYDGLIYSLGFLVGWPIILFLIAERLRNLGRYTFADVASYRLKQGPIRILSACGSLVVVALYLIAQMVGAGKLIELLFGLNYHIAVVLVGVLMMMYVLFGGMLATTWVQIIKAVLLLFGASFMAFMVMKHVGFSFNNLFSEAMAVHPKGVDIMKPGGLVKDPISALSLGLGLMFGTAGLPHILMRFFTVSDAREARKSVFYATGFMGYFYILTFIIGFGAIMLVGANPEYKDAAGHLIGGNNMAAVHLANAVGGNLFLGFISAVAFATILAVVAGLTLAGASAVSHDLYANVFKKGATEREELRVSKITVLILGVIAIILGVLFENQNIAFMVGLAFAIAASCNFPIILLSMYWSKLTTRGAMLGGWLGLITAVVLMILGPTIWVQILGHEKAIFPYEYPALFSISVAFLGIWFFSATDNSAEGARERELFRAQFIRSQTGFGVEQGRAH</sequence>
<gene>
    <name evidence="1" type="primary">actP</name>
    <name type="ordered locus">ECP_4299</name>
</gene>
<feature type="chain" id="PRO_1000024337" description="Cation/acetate symporter ActP">
    <location>
        <begin position="1"/>
        <end position="549"/>
    </location>
</feature>
<feature type="transmembrane region" description="Helical" evidence="1">
    <location>
        <begin position="33"/>
        <end position="53"/>
    </location>
</feature>
<feature type="transmembrane region" description="Helical" evidence="1">
    <location>
        <begin position="77"/>
        <end position="97"/>
    </location>
</feature>
<feature type="transmembrane region" description="Helical" evidence="1">
    <location>
        <begin position="103"/>
        <end position="123"/>
    </location>
</feature>
<feature type="transmembrane region" description="Helical" evidence="1">
    <location>
        <begin position="148"/>
        <end position="168"/>
    </location>
</feature>
<feature type="transmembrane region" description="Helical" evidence="1">
    <location>
        <begin position="183"/>
        <end position="203"/>
    </location>
</feature>
<feature type="transmembrane region" description="Helical" evidence="1">
    <location>
        <begin position="206"/>
        <end position="226"/>
    </location>
</feature>
<feature type="transmembrane region" description="Helical" evidence="1">
    <location>
        <begin position="262"/>
        <end position="282"/>
    </location>
</feature>
<feature type="transmembrane region" description="Helical" evidence="1">
    <location>
        <begin position="303"/>
        <end position="323"/>
    </location>
</feature>
<feature type="transmembrane region" description="Helical" evidence="1">
    <location>
        <begin position="355"/>
        <end position="375"/>
    </location>
</feature>
<feature type="transmembrane region" description="Helical" evidence="1">
    <location>
        <begin position="404"/>
        <end position="424"/>
    </location>
</feature>
<feature type="transmembrane region" description="Helical" evidence="1">
    <location>
        <begin position="428"/>
        <end position="448"/>
    </location>
</feature>
<feature type="transmembrane region" description="Helical" evidence="1">
    <location>
        <begin position="464"/>
        <end position="484"/>
    </location>
</feature>
<feature type="transmembrane region" description="Helical" evidence="1">
    <location>
        <begin position="493"/>
        <end position="513"/>
    </location>
</feature>
<accession>Q0T9Y2</accession>
<reference key="1">
    <citation type="journal article" date="2006" name="Mol. Microbiol.">
        <title>Role of pathogenicity island-associated integrases in the genome plasticity of uropathogenic Escherichia coli strain 536.</title>
        <authorList>
            <person name="Hochhut B."/>
            <person name="Wilde C."/>
            <person name="Balling G."/>
            <person name="Middendorf B."/>
            <person name="Dobrindt U."/>
            <person name="Brzuszkiewicz E."/>
            <person name="Gottschalk G."/>
            <person name="Carniel E."/>
            <person name="Hacker J."/>
        </authorList>
    </citation>
    <scope>NUCLEOTIDE SEQUENCE [LARGE SCALE GENOMIC DNA]</scope>
    <source>
        <strain>536 / UPEC</strain>
    </source>
</reference>
<protein>
    <recommendedName>
        <fullName evidence="1">Cation/acetate symporter ActP</fullName>
    </recommendedName>
    <alternativeName>
        <fullName evidence="1">Acetate permease</fullName>
    </alternativeName>
    <alternativeName>
        <fullName evidence="1">Acetate transporter ActP</fullName>
    </alternativeName>
</protein>
<dbReference type="EMBL" id="CP000247">
    <property type="protein sequence ID" value="ABG72247.1"/>
    <property type="molecule type" value="Genomic_DNA"/>
</dbReference>
<dbReference type="RefSeq" id="WP_000832548.1">
    <property type="nucleotide sequence ID" value="NC_008253.1"/>
</dbReference>
<dbReference type="SMR" id="Q0T9Y2"/>
<dbReference type="KEGG" id="ecp:ECP_4299"/>
<dbReference type="HOGENOM" id="CLU_018808_8_3_6"/>
<dbReference type="Proteomes" id="UP000009182">
    <property type="component" value="Chromosome"/>
</dbReference>
<dbReference type="GO" id="GO:0005886">
    <property type="term" value="C:plasma membrane"/>
    <property type="evidence" value="ECO:0007669"/>
    <property type="project" value="UniProtKB-SubCell"/>
</dbReference>
<dbReference type="GO" id="GO:0015123">
    <property type="term" value="F:acetate transmembrane transporter activity"/>
    <property type="evidence" value="ECO:0007669"/>
    <property type="project" value="UniProtKB-UniRule"/>
</dbReference>
<dbReference type="GO" id="GO:0043879">
    <property type="term" value="F:glycolate transmembrane transporter activity"/>
    <property type="evidence" value="ECO:0007669"/>
    <property type="project" value="InterPro"/>
</dbReference>
<dbReference type="GO" id="GO:0015293">
    <property type="term" value="F:symporter activity"/>
    <property type="evidence" value="ECO:0007669"/>
    <property type="project" value="UniProtKB-KW"/>
</dbReference>
<dbReference type="GO" id="GO:0006847">
    <property type="term" value="P:plasma membrane acetate transport"/>
    <property type="evidence" value="ECO:0007669"/>
    <property type="project" value="TreeGrafter"/>
</dbReference>
<dbReference type="GO" id="GO:0006814">
    <property type="term" value="P:sodium ion transport"/>
    <property type="evidence" value="ECO:0007669"/>
    <property type="project" value="UniProtKB-KW"/>
</dbReference>
<dbReference type="CDD" id="cd11480">
    <property type="entry name" value="SLC5sbd_u4"/>
    <property type="match status" value="1"/>
</dbReference>
<dbReference type="FunFam" id="1.20.1730.10:FF:000001">
    <property type="entry name" value="Cation/acetate symporter ActP"/>
    <property type="match status" value="1"/>
</dbReference>
<dbReference type="Gene3D" id="1.20.1730.10">
    <property type="entry name" value="Sodium/glucose cotransporter"/>
    <property type="match status" value="1"/>
</dbReference>
<dbReference type="HAMAP" id="MF_01426">
    <property type="entry name" value="Acet_symport_ActP"/>
    <property type="match status" value="1"/>
</dbReference>
<dbReference type="InterPro" id="IPR014083">
    <property type="entry name" value="Cation/Ac_symporter_ActP"/>
</dbReference>
<dbReference type="InterPro" id="IPR038377">
    <property type="entry name" value="Na/Glc_symporter_sf"/>
</dbReference>
<dbReference type="InterPro" id="IPR001734">
    <property type="entry name" value="Na/solute_symporter"/>
</dbReference>
<dbReference type="InterPro" id="IPR018212">
    <property type="entry name" value="Na/solute_symporter_CS"/>
</dbReference>
<dbReference type="InterPro" id="IPR050277">
    <property type="entry name" value="Sodium:Solute_Symporter"/>
</dbReference>
<dbReference type="NCBIfam" id="NF006903">
    <property type="entry name" value="PRK09395.1"/>
    <property type="match status" value="1"/>
</dbReference>
<dbReference type="NCBIfam" id="NF009135">
    <property type="entry name" value="PRK12488.1"/>
    <property type="match status" value="1"/>
</dbReference>
<dbReference type="NCBIfam" id="TIGR00813">
    <property type="entry name" value="sss"/>
    <property type="match status" value="1"/>
</dbReference>
<dbReference type="NCBIfam" id="TIGR02711">
    <property type="entry name" value="symport_actP"/>
    <property type="match status" value="1"/>
</dbReference>
<dbReference type="PANTHER" id="PTHR48086:SF6">
    <property type="entry name" value="CATION_ACETATE SYMPORTER ACTP"/>
    <property type="match status" value="1"/>
</dbReference>
<dbReference type="PANTHER" id="PTHR48086">
    <property type="entry name" value="SODIUM/PROLINE SYMPORTER-RELATED"/>
    <property type="match status" value="1"/>
</dbReference>
<dbReference type="Pfam" id="PF00474">
    <property type="entry name" value="SSF"/>
    <property type="match status" value="1"/>
</dbReference>
<dbReference type="PROSITE" id="PS00456">
    <property type="entry name" value="NA_SOLUT_SYMP_1"/>
    <property type="match status" value="1"/>
</dbReference>
<dbReference type="PROSITE" id="PS00457">
    <property type="entry name" value="NA_SOLUT_SYMP_2"/>
    <property type="match status" value="1"/>
</dbReference>
<dbReference type="PROSITE" id="PS50283">
    <property type="entry name" value="NA_SOLUT_SYMP_3"/>
    <property type="match status" value="1"/>
</dbReference>
<evidence type="ECO:0000255" key="1">
    <source>
        <dbReference type="HAMAP-Rule" id="MF_01426"/>
    </source>
</evidence>